<keyword id="KW-0963">Cytoplasm</keyword>
<keyword id="KW-0671">Queuosine biosynthesis</keyword>
<keyword id="KW-0949">S-adenosyl-L-methionine</keyword>
<keyword id="KW-0808">Transferase</keyword>
<sequence>MKRSEFYFELPEELIAQEPLEDRASSRLMILNKKTGEIEHDIFKNITKYLKPGDCLVLNNTKVIPARLIGRREDSGGKIEFVLLKRISNNEWEILVKPGRRAKIGSKFVFGNGELIAEILDTTEVGGRIVRFYYEGVFEEVLDKLGEMPVPPYIKKKLKNKDRYQTVYAKYEGSAAAPTAGLHFTEELLEKIRQMGVKTVFITLHVGLGTFRPVKEEVIENHKMHEEFYIVTKEAAEEINETRKSGGRIIAVGTTSTRTLETVADEDGYIKEKSGWTDIFIYPGYKFKAIDGMITNFHLPESTLIMMVSAFAGKENIMRAYKIAVEKKYRFFSFGDAMLII</sequence>
<feature type="chain" id="PRO_1000094825" description="S-adenosylmethionine:tRNA ribosyltransferase-isomerase">
    <location>
        <begin position="1"/>
        <end position="341"/>
    </location>
</feature>
<gene>
    <name evidence="1" type="primary">queA</name>
    <name type="ordered locus">Teth514_1456</name>
</gene>
<reference key="1">
    <citation type="submission" date="2008-01" db="EMBL/GenBank/DDBJ databases">
        <title>Complete sequence of Thermoanaerobacter sp. X514.</title>
        <authorList>
            <consortium name="US DOE Joint Genome Institute"/>
            <person name="Copeland A."/>
            <person name="Lucas S."/>
            <person name="Lapidus A."/>
            <person name="Barry K."/>
            <person name="Glavina del Rio T."/>
            <person name="Dalin E."/>
            <person name="Tice H."/>
            <person name="Pitluck S."/>
            <person name="Bruce D."/>
            <person name="Goodwin L."/>
            <person name="Saunders E."/>
            <person name="Brettin T."/>
            <person name="Detter J.C."/>
            <person name="Han C."/>
            <person name="Schmutz J."/>
            <person name="Larimer F."/>
            <person name="Land M."/>
            <person name="Hauser L."/>
            <person name="Kyrpides N."/>
            <person name="Kim E."/>
            <person name="Hemme C."/>
            <person name="Fields M.W."/>
            <person name="He Z."/>
            <person name="Zhou J."/>
            <person name="Richardson P."/>
        </authorList>
    </citation>
    <scope>NUCLEOTIDE SEQUENCE [LARGE SCALE GENOMIC DNA]</scope>
    <source>
        <strain>X514</strain>
    </source>
</reference>
<organism>
    <name type="scientific">Thermoanaerobacter sp. (strain X514)</name>
    <dbReference type="NCBI Taxonomy" id="399726"/>
    <lineage>
        <taxon>Bacteria</taxon>
        <taxon>Bacillati</taxon>
        <taxon>Bacillota</taxon>
        <taxon>Clostridia</taxon>
        <taxon>Thermoanaerobacterales</taxon>
        <taxon>Thermoanaerobacteraceae</taxon>
        <taxon>Thermoanaerobacter</taxon>
    </lineage>
</organism>
<proteinExistence type="inferred from homology"/>
<name>QUEA_THEPX</name>
<protein>
    <recommendedName>
        <fullName evidence="1">S-adenosylmethionine:tRNA ribosyltransferase-isomerase</fullName>
        <ecNumber evidence="1">2.4.99.17</ecNumber>
    </recommendedName>
    <alternativeName>
        <fullName evidence="1">Queuosine biosynthesis protein QueA</fullName>
    </alternativeName>
</protein>
<comment type="function">
    <text evidence="1">Transfers and isomerizes the ribose moiety from AdoMet to the 7-aminomethyl group of 7-deazaguanine (preQ1-tRNA) to give epoxyqueuosine (oQ-tRNA).</text>
</comment>
<comment type="catalytic activity">
    <reaction evidence="1">
        <text>7-aminomethyl-7-carbaguanosine(34) in tRNA + S-adenosyl-L-methionine = epoxyqueuosine(34) in tRNA + adenine + L-methionine + 2 H(+)</text>
        <dbReference type="Rhea" id="RHEA:32155"/>
        <dbReference type="Rhea" id="RHEA-COMP:10342"/>
        <dbReference type="Rhea" id="RHEA-COMP:18582"/>
        <dbReference type="ChEBI" id="CHEBI:15378"/>
        <dbReference type="ChEBI" id="CHEBI:16708"/>
        <dbReference type="ChEBI" id="CHEBI:57844"/>
        <dbReference type="ChEBI" id="CHEBI:59789"/>
        <dbReference type="ChEBI" id="CHEBI:82833"/>
        <dbReference type="ChEBI" id="CHEBI:194443"/>
        <dbReference type="EC" id="2.4.99.17"/>
    </reaction>
</comment>
<comment type="pathway">
    <text evidence="1">tRNA modification; tRNA-queuosine biosynthesis.</text>
</comment>
<comment type="subunit">
    <text evidence="1">Monomer.</text>
</comment>
<comment type="subcellular location">
    <subcellularLocation>
        <location evidence="1">Cytoplasm</location>
    </subcellularLocation>
</comment>
<comment type="similarity">
    <text evidence="1">Belongs to the QueA family.</text>
</comment>
<accession>B0K0M0</accession>
<dbReference type="EC" id="2.4.99.17" evidence="1"/>
<dbReference type="EMBL" id="CP000923">
    <property type="protein sequence ID" value="ABY92745.1"/>
    <property type="molecule type" value="Genomic_DNA"/>
</dbReference>
<dbReference type="RefSeq" id="WP_009052290.1">
    <property type="nucleotide sequence ID" value="NC_010320.1"/>
</dbReference>
<dbReference type="SMR" id="B0K0M0"/>
<dbReference type="KEGG" id="tex:Teth514_1456"/>
<dbReference type="HOGENOM" id="CLU_039110_1_0_9"/>
<dbReference type="UniPathway" id="UPA00392"/>
<dbReference type="Proteomes" id="UP000002155">
    <property type="component" value="Chromosome"/>
</dbReference>
<dbReference type="GO" id="GO:0005737">
    <property type="term" value="C:cytoplasm"/>
    <property type="evidence" value="ECO:0007669"/>
    <property type="project" value="UniProtKB-SubCell"/>
</dbReference>
<dbReference type="GO" id="GO:0051075">
    <property type="term" value="F:S-adenosylmethionine:tRNA ribosyltransferase-isomerase activity"/>
    <property type="evidence" value="ECO:0007669"/>
    <property type="project" value="UniProtKB-EC"/>
</dbReference>
<dbReference type="GO" id="GO:0008616">
    <property type="term" value="P:queuosine biosynthetic process"/>
    <property type="evidence" value="ECO:0007669"/>
    <property type="project" value="UniProtKB-UniRule"/>
</dbReference>
<dbReference type="GO" id="GO:0002099">
    <property type="term" value="P:tRNA wobble guanine modification"/>
    <property type="evidence" value="ECO:0007669"/>
    <property type="project" value="TreeGrafter"/>
</dbReference>
<dbReference type="FunFam" id="2.40.10.240:FF:000002">
    <property type="entry name" value="S-adenosylmethionine:tRNA ribosyltransferase-isomerase"/>
    <property type="match status" value="1"/>
</dbReference>
<dbReference type="FunFam" id="3.40.1780.10:FF:000001">
    <property type="entry name" value="S-adenosylmethionine:tRNA ribosyltransferase-isomerase"/>
    <property type="match status" value="1"/>
</dbReference>
<dbReference type="Gene3D" id="2.40.10.240">
    <property type="entry name" value="QueA-like"/>
    <property type="match status" value="1"/>
</dbReference>
<dbReference type="Gene3D" id="3.40.1780.10">
    <property type="entry name" value="QueA-like"/>
    <property type="match status" value="1"/>
</dbReference>
<dbReference type="HAMAP" id="MF_00113">
    <property type="entry name" value="QueA"/>
    <property type="match status" value="1"/>
</dbReference>
<dbReference type="InterPro" id="IPR003699">
    <property type="entry name" value="QueA"/>
</dbReference>
<dbReference type="InterPro" id="IPR042118">
    <property type="entry name" value="QueA_dom1"/>
</dbReference>
<dbReference type="InterPro" id="IPR042119">
    <property type="entry name" value="QueA_dom2"/>
</dbReference>
<dbReference type="InterPro" id="IPR036100">
    <property type="entry name" value="QueA_sf"/>
</dbReference>
<dbReference type="NCBIfam" id="NF001140">
    <property type="entry name" value="PRK00147.1"/>
    <property type="match status" value="1"/>
</dbReference>
<dbReference type="NCBIfam" id="TIGR00113">
    <property type="entry name" value="queA"/>
    <property type="match status" value="1"/>
</dbReference>
<dbReference type="PANTHER" id="PTHR30307">
    <property type="entry name" value="S-ADENOSYLMETHIONINE:TRNA RIBOSYLTRANSFERASE-ISOMERASE"/>
    <property type="match status" value="1"/>
</dbReference>
<dbReference type="PANTHER" id="PTHR30307:SF0">
    <property type="entry name" value="S-ADENOSYLMETHIONINE:TRNA RIBOSYLTRANSFERASE-ISOMERASE"/>
    <property type="match status" value="1"/>
</dbReference>
<dbReference type="Pfam" id="PF02547">
    <property type="entry name" value="Queuosine_synth"/>
    <property type="match status" value="1"/>
</dbReference>
<dbReference type="SUPFAM" id="SSF111337">
    <property type="entry name" value="QueA-like"/>
    <property type="match status" value="1"/>
</dbReference>
<evidence type="ECO:0000255" key="1">
    <source>
        <dbReference type="HAMAP-Rule" id="MF_00113"/>
    </source>
</evidence>